<sequence>MELEKVKINSLHCNDAVLSSLQASPSATHPQSVPSKANAVTEASIIEKTNLQHNVQEDNSYNRDCDSPVSSSSEPEKELDDLRYLHSSSLTNSVVVGKSTGSLNGAYSITSVTSKTKTLEPNSASGSACLTIAPTADHIKKRIPSSRTPTRKALRIKFYRNGDRFYPGITIPVSNERYRSFERLFEDLTRLLEENVKIPGAVRTIYNMCGKKITSLDELEDGQSYVCSCNNENFKKVEYNTGSQPLSNLTLTSSRSNSHRLDKCRPSSPLKNGLLAGSSPLPTCGGGTGNGSPHIASRSSDRVTVVHPRIVTLIRSGTKPRRIMRLLLNKRNSPSFDHVLTAITQVVRLDTGYVRKVFTLSGVSVVRLSDFFGSDDVFFAYGTERINTAEDFKLEAEEHRAINVIRKTMRTTGTTCKGPKPKMPIKSKKVYPPVVDSEAFKAATTPEDDSHAALLTSTGMEINELPSNIRNTYTLGRIIGDGNFAIVFKIKHRQTGHSYALKIIDKNKCKGKEHYIDAEVRVMKKLNHPHIISLILSVDQNTNMYLVLEYVSGGDLFDAITQVTRFSESQSRIMIRHLGAAMTYLHSMGIVHRDIKPENLLVKLDEHGHVLELKLADFGLACEVNDLLYAVCGTPTYVAPEILLEVGYGLKIDVWAAGIILYILLCGFPPFVAPDNQQEPLFDAIISGIYEFPDPYWSDIGDGVRDLIANMLQADPDVRFTSEDILDHPWTIGNQNECTTYKR</sequence>
<protein>
    <recommendedName>
        <fullName evidence="2 8">Serine/threonine-protein kinase GD17699</fullName>
        <ecNumber>2.7.11.1</ecNumber>
    </recommendedName>
    <alternativeName>
        <fullName>Doublecortin-like and CAM kinase-like protein</fullName>
    </alternativeName>
</protein>
<name>DCLK_DROSI</name>
<evidence type="ECO:0000250" key="1">
    <source>
        <dbReference type="UniProtKB" id="P28523"/>
    </source>
</evidence>
<evidence type="ECO:0000250" key="2">
    <source>
        <dbReference type="UniProtKB" id="Q7PLI7"/>
    </source>
</evidence>
<evidence type="ECO:0000255" key="3"/>
<evidence type="ECO:0000255" key="4">
    <source>
        <dbReference type="PROSITE-ProRule" id="PRU00072"/>
    </source>
</evidence>
<evidence type="ECO:0000255" key="5">
    <source>
        <dbReference type="PROSITE-ProRule" id="PRU00159"/>
    </source>
</evidence>
<evidence type="ECO:0000255" key="6">
    <source>
        <dbReference type="PROSITE-ProRule" id="PRU10027"/>
    </source>
</evidence>
<evidence type="ECO:0000256" key="7">
    <source>
        <dbReference type="SAM" id="MobiDB-lite"/>
    </source>
</evidence>
<evidence type="ECO:0000312" key="8">
    <source>
        <dbReference type="EMBL" id="EDX15261.1"/>
    </source>
</evidence>
<keyword id="KW-0067">ATP-binding</keyword>
<keyword id="KW-0418">Kinase</keyword>
<keyword id="KW-0547">Nucleotide-binding</keyword>
<keyword id="KW-0597">Phosphoprotein</keyword>
<keyword id="KW-1185">Reference proteome</keyword>
<keyword id="KW-0677">Repeat</keyword>
<keyword id="KW-0723">Serine/threonine-protein kinase</keyword>
<keyword id="KW-0808">Transferase</keyword>
<accession>B4NSS9</accession>
<proteinExistence type="inferred from homology"/>
<dbReference type="EC" id="2.7.11.1"/>
<dbReference type="EMBL" id="CH982438">
    <property type="protein sequence ID" value="EDX15261.1"/>
    <property type="molecule type" value="Genomic_DNA"/>
</dbReference>
<dbReference type="SMR" id="B4NSS9"/>
<dbReference type="STRING" id="7240.B4NSS9"/>
<dbReference type="HOGENOM" id="CLU_000288_94_1_1"/>
<dbReference type="OMA" id="LMTECKV"/>
<dbReference type="OrthoDB" id="1738954at2759"/>
<dbReference type="PhylomeDB" id="B4NSS9"/>
<dbReference type="Proteomes" id="UP000000304">
    <property type="component" value="Unassembled WGS sequence"/>
</dbReference>
<dbReference type="GO" id="GO:0005524">
    <property type="term" value="F:ATP binding"/>
    <property type="evidence" value="ECO:0007669"/>
    <property type="project" value="UniProtKB-KW"/>
</dbReference>
<dbReference type="GO" id="GO:0106310">
    <property type="term" value="F:protein serine kinase activity"/>
    <property type="evidence" value="ECO:0007669"/>
    <property type="project" value="RHEA"/>
</dbReference>
<dbReference type="GO" id="GO:0004674">
    <property type="term" value="F:protein serine/threonine kinase activity"/>
    <property type="evidence" value="ECO:0000250"/>
    <property type="project" value="UniProtKB"/>
</dbReference>
<dbReference type="GO" id="GO:0035556">
    <property type="term" value="P:intracellular signal transduction"/>
    <property type="evidence" value="ECO:0007669"/>
    <property type="project" value="InterPro"/>
</dbReference>
<dbReference type="CDD" id="cd16109">
    <property type="entry name" value="DCX1"/>
    <property type="match status" value="1"/>
</dbReference>
<dbReference type="FunFam" id="3.30.200.20:FF:000042">
    <property type="entry name" value="Aurora kinase A"/>
    <property type="match status" value="1"/>
</dbReference>
<dbReference type="FunFam" id="1.10.510.10:FF:000866">
    <property type="entry name" value="Serine/threonine-protein kinase GA29083"/>
    <property type="match status" value="1"/>
</dbReference>
<dbReference type="FunFam" id="3.10.20.230:FF:000017">
    <property type="entry name" value="Serine/threonine-protein kinase GA29083"/>
    <property type="match status" value="1"/>
</dbReference>
<dbReference type="FunFam" id="3.10.20.230:FF:000021">
    <property type="entry name" value="Serine/threonine-protein kinase GA29083"/>
    <property type="match status" value="1"/>
</dbReference>
<dbReference type="Gene3D" id="3.10.20.230">
    <property type="entry name" value="Doublecortin domain"/>
    <property type="match status" value="2"/>
</dbReference>
<dbReference type="Gene3D" id="1.10.510.10">
    <property type="entry name" value="Transferase(Phosphotransferase) domain 1"/>
    <property type="match status" value="1"/>
</dbReference>
<dbReference type="InterPro" id="IPR003533">
    <property type="entry name" value="Doublecortin_dom"/>
</dbReference>
<dbReference type="InterPro" id="IPR036572">
    <property type="entry name" value="Doublecortin_dom_sf"/>
</dbReference>
<dbReference type="InterPro" id="IPR011009">
    <property type="entry name" value="Kinase-like_dom_sf"/>
</dbReference>
<dbReference type="InterPro" id="IPR000719">
    <property type="entry name" value="Prot_kinase_dom"/>
</dbReference>
<dbReference type="InterPro" id="IPR017441">
    <property type="entry name" value="Protein_kinase_ATP_BS"/>
</dbReference>
<dbReference type="InterPro" id="IPR008271">
    <property type="entry name" value="Ser/Thr_kinase_AS"/>
</dbReference>
<dbReference type="PANTHER" id="PTHR24347">
    <property type="entry name" value="SERINE/THREONINE-PROTEIN KINASE"/>
    <property type="match status" value="1"/>
</dbReference>
<dbReference type="Pfam" id="PF03607">
    <property type="entry name" value="DCX"/>
    <property type="match status" value="2"/>
</dbReference>
<dbReference type="Pfam" id="PF00069">
    <property type="entry name" value="Pkinase"/>
    <property type="match status" value="1"/>
</dbReference>
<dbReference type="SMART" id="SM00537">
    <property type="entry name" value="DCX"/>
    <property type="match status" value="2"/>
</dbReference>
<dbReference type="SMART" id="SM00220">
    <property type="entry name" value="S_TKc"/>
    <property type="match status" value="1"/>
</dbReference>
<dbReference type="SUPFAM" id="SSF89837">
    <property type="entry name" value="Doublecortin (DC)"/>
    <property type="match status" value="2"/>
</dbReference>
<dbReference type="SUPFAM" id="SSF56112">
    <property type="entry name" value="Protein kinase-like (PK-like)"/>
    <property type="match status" value="1"/>
</dbReference>
<dbReference type="PROSITE" id="PS50309">
    <property type="entry name" value="DC"/>
    <property type="match status" value="2"/>
</dbReference>
<dbReference type="PROSITE" id="PS00107">
    <property type="entry name" value="PROTEIN_KINASE_ATP"/>
    <property type="match status" value="1"/>
</dbReference>
<dbReference type="PROSITE" id="PS50011">
    <property type="entry name" value="PROTEIN_KINASE_DOM"/>
    <property type="match status" value="1"/>
</dbReference>
<dbReference type="PROSITE" id="PS00108">
    <property type="entry name" value="PROTEIN_KINASE_ST"/>
    <property type="match status" value="1"/>
</dbReference>
<reference evidence="8" key="1">
    <citation type="journal article" date="2007" name="Nature">
        <title>Evolution of genes and genomes on the Drosophila phylogeny.</title>
        <authorList>
            <consortium name="Drosophila 12 genomes consortium"/>
        </authorList>
    </citation>
    <scope>NUCLEOTIDE SEQUENCE [LARGE SCALE GENOMIC DNA]</scope>
</reference>
<organism>
    <name type="scientific">Drosophila simulans</name>
    <name type="common">Fruit fly</name>
    <dbReference type="NCBI Taxonomy" id="7240"/>
    <lineage>
        <taxon>Eukaryota</taxon>
        <taxon>Metazoa</taxon>
        <taxon>Ecdysozoa</taxon>
        <taxon>Arthropoda</taxon>
        <taxon>Hexapoda</taxon>
        <taxon>Insecta</taxon>
        <taxon>Pterygota</taxon>
        <taxon>Neoptera</taxon>
        <taxon>Endopterygota</taxon>
        <taxon>Diptera</taxon>
        <taxon>Brachycera</taxon>
        <taxon>Muscomorpha</taxon>
        <taxon>Ephydroidea</taxon>
        <taxon>Drosophilidae</taxon>
        <taxon>Drosophila</taxon>
        <taxon>Sophophora</taxon>
    </lineage>
</organism>
<comment type="catalytic activity">
    <reaction evidence="1">
        <text>L-seryl-[protein] + ATP = O-phospho-L-seryl-[protein] + ADP + H(+)</text>
        <dbReference type="Rhea" id="RHEA:17989"/>
        <dbReference type="Rhea" id="RHEA-COMP:9863"/>
        <dbReference type="Rhea" id="RHEA-COMP:11604"/>
        <dbReference type="ChEBI" id="CHEBI:15378"/>
        <dbReference type="ChEBI" id="CHEBI:29999"/>
        <dbReference type="ChEBI" id="CHEBI:30616"/>
        <dbReference type="ChEBI" id="CHEBI:83421"/>
        <dbReference type="ChEBI" id="CHEBI:456216"/>
        <dbReference type="EC" id="2.7.11.1"/>
    </reaction>
</comment>
<comment type="catalytic activity">
    <reaction evidence="1">
        <text>L-threonyl-[protein] + ATP = O-phospho-L-threonyl-[protein] + ADP + H(+)</text>
        <dbReference type="Rhea" id="RHEA:46608"/>
        <dbReference type="Rhea" id="RHEA-COMP:11060"/>
        <dbReference type="Rhea" id="RHEA-COMP:11605"/>
        <dbReference type="ChEBI" id="CHEBI:15378"/>
        <dbReference type="ChEBI" id="CHEBI:30013"/>
        <dbReference type="ChEBI" id="CHEBI:30616"/>
        <dbReference type="ChEBI" id="CHEBI:61977"/>
        <dbReference type="ChEBI" id="CHEBI:456216"/>
        <dbReference type="EC" id="2.7.11.1"/>
    </reaction>
</comment>
<comment type="similarity">
    <text evidence="3">Belongs to the protein kinase superfamily. CAMK Ser/Thr protein kinase family. CaMK subfamily.</text>
</comment>
<feature type="chain" id="PRO_0000392571" description="Serine/threonine-protein kinase GD17699">
    <location>
        <begin position="1"/>
        <end position="743"/>
    </location>
</feature>
<feature type="domain" description="Doublecortin 1" evidence="4">
    <location>
        <begin position="154"/>
        <end position="240"/>
    </location>
</feature>
<feature type="domain" description="Doublecortin 2" evidence="4">
    <location>
        <begin position="309"/>
        <end position="392"/>
    </location>
</feature>
<feature type="domain" description="Protein kinase" evidence="5">
    <location>
        <begin position="473"/>
        <end position="731"/>
    </location>
</feature>
<feature type="region of interest" description="Disordered" evidence="7">
    <location>
        <begin position="54"/>
        <end position="78"/>
    </location>
</feature>
<feature type="active site" description="Proton acceptor" evidence="1 5 6">
    <location>
        <position position="594"/>
    </location>
</feature>
<feature type="binding site" evidence="1 5">
    <location>
        <begin position="479"/>
        <end position="487"/>
    </location>
    <ligand>
        <name>ATP</name>
        <dbReference type="ChEBI" id="CHEBI:30616"/>
    </ligand>
</feature>
<feature type="binding site" evidence="1 5">
    <location>
        <position position="502"/>
    </location>
    <ligand>
        <name>ATP</name>
        <dbReference type="ChEBI" id="CHEBI:30616"/>
    </ligand>
</feature>
<gene>
    <name type="ORF">GD17699</name>
</gene>